<proteinExistence type="inferred from homology"/>
<comment type="function">
    <text evidence="1">This protein binds to the 23S rRNA, and is important in its secondary structure. It is located near the subunit interface in the base of the L7/L12 stalk, and near the tRNA binding site of the peptidyltransferase center.</text>
</comment>
<comment type="subunit">
    <text evidence="1">Part of the 50S ribosomal subunit.</text>
</comment>
<comment type="similarity">
    <text evidence="1">Belongs to the universal ribosomal protein uL6 family.</text>
</comment>
<gene>
    <name evidence="1" type="primary">rplF</name>
    <name type="ordered locus">MADE_1013985</name>
</gene>
<organism>
    <name type="scientific">Alteromonas mediterranea (strain DSM 17117 / CIP 110805 / LMG 28347 / Deep ecotype)</name>
    <dbReference type="NCBI Taxonomy" id="1774373"/>
    <lineage>
        <taxon>Bacteria</taxon>
        <taxon>Pseudomonadati</taxon>
        <taxon>Pseudomonadota</taxon>
        <taxon>Gammaproteobacteria</taxon>
        <taxon>Alteromonadales</taxon>
        <taxon>Alteromonadaceae</taxon>
        <taxon>Alteromonas/Salinimonas group</taxon>
        <taxon>Alteromonas</taxon>
    </lineage>
</organism>
<protein>
    <recommendedName>
        <fullName evidence="1">Large ribosomal subunit protein uL6</fullName>
    </recommendedName>
    <alternativeName>
        <fullName evidence="2">50S ribosomal protein L6</fullName>
    </alternativeName>
</protein>
<feature type="chain" id="PRO_1000143940" description="Large ribosomal subunit protein uL6">
    <location>
        <begin position="1"/>
        <end position="177"/>
    </location>
</feature>
<keyword id="KW-0687">Ribonucleoprotein</keyword>
<keyword id="KW-0689">Ribosomal protein</keyword>
<keyword id="KW-0694">RNA-binding</keyword>
<keyword id="KW-0699">rRNA-binding</keyword>
<dbReference type="EMBL" id="CP001103">
    <property type="protein sequence ID" value="AEA98931.1"/>
    <property type="molecule type" value="Genomic_DNA"/>
</dbReference>
<dbReference type="RefSeq" id="WP_012519223.1">
    <property type="nucleotide sequence ID" value="NC_011138.3"/>
</dbReference>
<dbReference type="SMR" id="B4RT43"/>
<dbReference type="GeneID" id="56343831"/>
<dbReference type="KEGG" id="amc:MADE_1013985"/>
<dbReference type="HOGENOM" id="CLU_065464_1_2_6"/>
<dbReference type="Proteomes" id="UP000001870">
    <property type="component" value="Chromosome"/>
</dbReference>
<dbReference type="GO" id="GO:0022625">
    <property type="term" value="C:cytosolic large ribosomal subunit"/>
    <property type="evidence" value="ECO:0007669"/>
    <property type="project" value="TreeGrafter"/>
</dbReference>
<dbReference type="GO" id="GO:0019843">
    <property type="term" value="F:rRNA binding"/>
    <property type="evidence" value="ECO:0007669"/>
    <property type="project" value="UniProtKB-UniRule"/>
</dbReference>
<dbReference type="GO" id="GO:0003735">
    <property type="term" value="F:structural constituent of ribosome"/>
    <property type="evidence" value="ECO:0007669"/>
    <property type="project" value="InterPro"/>
</dbReference>
<dbReference type="GO" id="GO:0002181">
    <property type="term" value="P:cytoplasmic translation"/>
    <property type="evidence" value="ECO:0007669"/>
    <property type="project" value="TreeGrafter"/>
</dbReference>
<dbReference type="FunFam" id="3.90.930.12:FF:000001">
    <property type="entry name" value="50S ribosomal protein L6"/>
    <property type="match status" value="1"/>
</dbReference>
<dbReference type="FunFam" id="3.90.930.12:FF:000002">
    <property type="entry name" value="50S ribosomal protein L6"/>
    <property type="match status" value="1"/>
</dbReference>
<dbReference type="Gene3D" id="3.90.930.12">
    <property type="entry name" value="Ribosomal protein L6, alpha-beta domain"/>
    <property type="match status" value="2"/>
</dbReference>
<dbReference type="HAMAP" id="MF_01365_B">
    <property type="entry name" value="Ribosomal_uL6_B"/>
    <property type="match status" value="1"/>
</dbReference>
<dbReference type="InterPro" id="IPR000702">
    <property type="entry name" value="Ribosomal_uL6-like"/>
</dbReference>
<dbReference type="InterPro" id="IPR036789">
    <property type="entry name" value="Ribosomal_uL6-like_a/b-dom_sf"/>
</dbReference>
<dbReference type="InterPro" id="IPR020040">
    <property type="entry name" value="Ribosomal_uL6_a/b-dom"/>
</dbReference>
<dbReference type="InterPro" id="IPR019906">
    <property type="entry name" value="Ribosomal_uL6_bac-type"/>
</dbReference>
<dbReference type="InterPro" id="IPR002358">
    <property type="entry name" value="Ribosomal_uL6_CS"/>
</dbReference>
<dbReference type="NCBIfam" id="TIGR03654">
    <property type="entry name" value="L6_bact"/>
    <property type="match status" value="1"/>
</dbReference>
<dbReference type="PANTHER" id="PTHR11655">
    <property type="entry name" value="60S/50S RIBOSOMAL PROTEIN L6/L9"/>
    <property type="match status" value="1"/>
</dbReference>
<dbReference type="PANTHER" id="PTHR11655:SF14">
    <property type="entry name" value="LARGE RIBOSOMAL SUBUNIT PROTEIN UL6M"/>
    <property type="match status" value="1"/>
</dbReference>
<dbReference type="Pfam" id="PF00347">
    <property type="entry name" value="Ribosomal_L6"/>
    <property type="match status" value="2"/>
</dbReference>
<dbReference type="PIRSF" id="PIRSF002162">
    <property type="entry name" value="Ribosomal_L6"/>
    <property type="match status" value="1"/>
</dbReference>
<dbReference type="PRINTS" id="PR00059">
    <property type="entry name" value="RIBOSOMALL6"/>
</dbReference>
<dbReference type="SUPFAM" id="SSF56053">
    <property type="entry name" value="Ribosomal protein L6"/>
    <property type="match status" value="2"/>
</dbReference>
<dbReference type="PROSITE" id="PS00525">
    <property type="entry name" value="RIBOSOMAL_L6_1"/>
    <property type="match status" value="1"/>
</dbReference>
<sequence length="177" mass="19100">MSRIAKAPVDVVSGVEVSISGQEVTVKGSKGTLTRVFNDAVEVAQEENQLKALPREGFADSWAQAGTVRSILNAMVQGVSQGFEKKLTLLGVGYRAQAQGSKLNLTLGFSHPVVYEMPEGITVETPSQTEIVVKGADKQVVGQVAANIRGYRPPEPYKGKGVRYADENVRRKEAKKK</sequence>
<name>RL6_ALTMD</name>
<accession>B4RT43</accession>
<accession>F2GAJ7</accession>
<reference key="1">
    <citation type="journal article" date="2008" name="ISME J.">
        <title>Comparative genomics of two ecotypes of the marine planktonic copiotroph Alteromonas macleodii suggests alternative lifestyles associated with different kinds of particulate organic matter.</title>
        <authorList>
            <person name="Ivars-Martinez E."/>
            <person name="Martin-Cuadrado A.-B."/>
            <person name="D'Auria G."/>
            <person name="Mira A."/>
            <person name="Ferriera S."/>
            <person name="Johnson J."/>
            <person name="Friedman R."/>
            <person name="Rodriguez-Valera F."/>
        </authorList>
    </citation>
    <scope>NUCLEOTIDE SEQUENCE [LARGE SCALE GENOMIC DNA]</scope>
    <source>
        <strain>DSM 17117 / CIP 110805 / LMG 28347 / Deep ecotype</strain>
    </source>
</reference>
<evidence type="ECO:0000255" key="1">
    <source>
        <dbReference type="HAMAP-Rule" id="MF_01365"/>
    </source>
</evidence>
<evidence type="ECO:0000305" key="2"/>